<dbReference type="EC" id="6.1.1.7" evidence="1"/>
<dbReference type="EMBL" id="CP000937">
    <property type="protein sequence ID" value="ABZ87900.1"/>
    <property type="molecule type" value="Genomic_DNA"/>
</dbReference>
<dbReference type="SMR" id="B0TZY8"/>
<dbReference type="KEGG" id="fph:Fphi_1675"/>
<dbReference type="eggNOG" id="COG0013">
    <property type="taxonomic scope" value="Bacteria"/>
</dbReference>
<dbReference type="HOGENOM" id="CLU_004485_1_1_6"/>
<dbReference type="GO" id="GO:0005829">
    <property type="term" value="C:cytosol"/>
    <property type="evidence" value="ECO:0007669"/>
    <property type="project" value="TreeGrafter"/>
</dbReference>
<dbReference type="GO" id="GO:0004813">
    <property type="term" value="F:alanine-tRNA ligase activity"/>
    <property type="evidence" value="ECO:0007669"/>
    <property type="project" value="UniProtKB-UniRule"/>
</dbReference>
<dbReference type="GO" id="GO:0002161">
    <property type="term" value="F:aminoacyl-tRNA deacylase activity"/>
    <property type="evidence" value="ECO:0007669"/>
    <property type="project" value="TreeGrafter"/>
</dbReference>
<dbReference type="GO" id="GO:0005524">
    <property type="term" value="F:ATP binding"/>
    <property type="evidence" value="ECO:0007669"/>
    <property type="project" value="UniProtKB-UniRule"/>
</dbReference>
<dbReference type="GO" id="GO:0000049">
    <property type="term" value="F:tRNA binding"/>
    <property type="evidence" value="ECO:0007669"/>
    <property type="project" value="UniProtKB-KW"/>
</dbReference>
<dbReference type="GO" id="GO:0008270">
    <property type="term" value="F:zinc ion binding"/>
    <property type="evidence" value="ECO:0007669"/>
    <property type="project" value="UniProtKB-UniRule"/>
</dbReference>
<dbReference type="GO" id="GO:0006419">
    <property type="term" value="P:alanyl-tRNA aminoacylation"/>
    <property type="evidence" value="ECO:0007669"/>
    <property type="project" value="UniProtKB-UniRule"/>
</dbReference>
<dbReference type="GO" id="GO:0045892">
    <property type="term" value="P:negative regulation of DNA-templated transcription"/>
    <property type="evidence" value="ECO:0007669"/>
    <property type="project" value="TreeGrafter"/>
</dbReference>
<dbReference type="CDD" id="cd00673">
    <property type="entry name" value="AlaRS_core"/>
    <property type="match status" value="1"/>
</dbReference>
<dbReference type="FunFam" id="2.40.30.130:FF:000001">
    <property type="entry name" value="Alanine--tRNA ligase"/>
    <property type="match status" value="1"/>
</dbReference>
<dbReference type="FunFam" id="3.10.310.40:FF:000001">
    <property type="entry name" value="Alanine--tRNA ligase"/>
    <property type="match status" value="1"/>
</dbReference>
<dbReference type="FunFam" id="3.30.54.20:FF:000001">
    <property type="entry name" value="Alanine--tRNA ligase"/>
    <property type="match status" value="1"/>
</dbReference>
<dbReference type="FunFam" id="3.30.930.10:FF:000004">
    <property type="entry name" value="Alanine--tRNA ligase"/>
    <property type="match status" value="1"/>
</dbReference>
<dbReference type="FunFam" id="3.30.980.10:FF:000004">
    <property type="entry name" value="Alanine--tRNA ligase, cytoplasmic"/>
    <property type="match status" value="1"/>
</dbReference>
<dbReference type="Gene3D" id="2.40.30.130">
    <property type="match status" value="1"/>
</dbReference>
<dbReference type="Gene3D" id="3.10.310.40">
    <property type="match status" value="1"/>
</dbReference>
<dbReference type="Gene3D" id="3.30.54.20">
    <property type="match status" value="1"/>
</dbReference>
<dbReference type="Gene3D" id="6.10.250.550">
    <property type="match status" value="1"/>
</dbReference>
<dbReference type="Gene3D" id="3.30.930.10">
    <property type="entry name" value="Bira Bifunctional Protein, Domain 2"/>
    <property type="match status" value="1"/>
</dbReference>
<dbReference type="Gene3D" id="3.30.980.10">
    <property type="entry name" value="Threonyl-trna Synthetase, Chain A, domain 2"/>
    <property type="match status" value="1"/>
</dbReference>
<dbReference type="HAMAP" id="MF_00036_B">
    <property type="entry name" value="Ala_tRNA_synth_B"/>
    <property type="match status" value="1"/>
</dbReference>
<dbReference type="InterPro" id="IPR045864">
    <property type="entry name" value="aa-tRNA-synth_II/BPL/LPL"/>
</dbReference>
<dbReference type="InterPro" id="IPR002318">
    <property type="entry name" value="Ala-tRNA-lgiase_IIc"/>
</dbReference>
<dbReference type="InterPro" id="IPR018162">
    <property type="entry name" value="Ala-tRNA-ligase_IIc_anticod-bd"/>
</dbReference>
<dbReference type="InterPro" id="IPR018165">
    <property type="entry name" value="Ala-tRNA-synth_IIc_core"/>
</dbReference>
<dbReference type="InterPro" id="IPR018164">
    <property type="entry name" value="Ala-tRNA-synth_IIc_N"/>
</dbReference>
<dbReference type="InterPro" id="IPR050058">
    <property type="entry name" value="Ala-tRNA_ligase"/>
</dbReference>
<dbReference type="InterPro" id="IPR023033">
    <property type="entry name" value="Ala_tRNA_ligase_euk/bac"/>
</dbReference>
<dbReference type="InterPro" id="IPR003156">
    <property type="entry name" value="DHHA1_dom"/>
</dbReference>
<dbReference type="InterPro" id="IPR018163">
    <property type="entry name" value="Thr/Ala-tRNA-synth_IIc_edit"/>
</dbReference>
<dbReference type="InterPro" id="IPR009000">
    <property type="entry name" value="Transl_B-barrel_sf"/>
</dbReference>
<dbReference type="InterPro" id="IPR012947">
    <property type="entry name" value="tRNA_SAD"/>
</dbReference>
<dbReference type="NCBIfam" id="TIGR00344">
    <property type="entry name" value="alaS"/>
    <property type="match status" value="1"/>
</dbReference>
<dbReference type="PANTHER" id="PTHR11777:SF9">
    <property type="entry name" value="ALANINE--TRNA LIGASE, CYTOPLASMIC"/>
    <property type="match status" value="1"/>
</dbReference>
<dbReference type="PANTHER" id="PTHR11777">
    <property type="entry name" value="ALANYL-TRNA SYNTHETASE"/>
    <property type="match status" value="1"/>
</dbReference>
<dbReference type="Pfam" id="PF02272">
    <property type="entry name" value="DHHA1"/>
    <property type="match status" value="1"/>
</dbReference>
<dbReference type="Pfam" id="PF01411">
    <property type="entry name" value="tRNA-synt_2c"/>
    <property type="match status" value="1"/>
</dbReference>
<dbReference type="Pfam" id="PF07973">
    <property type="entry name" value="tRNA_SAD"/>
    <property type="match status" value="1"/>
</dbReference>
<dbReference type="PRINTS" id="PR00980">
    <property type="entry name" value="TRNASYNTHALA"/>
</dbReference>
<dbReference type="SMART" id="SM00863">
    <property type="entry name" value="tRNA_SAD"/>
    <property type="match status" value="1"/>
</dbReference>
<dbReference type="SUPFAM" id="SSF55681">
    <property type="entry name" value="Class II aaRS and biotin synthetases"/>
    <property type="match status" value="1"/>
</dbReference>
<dbReference type="SUPFAM" id="SSF101353">
    <property type="entry name" value="Putative anticodon-binding domain of alanyl-tRNA synthetase (AlaRS)"/>
    <property type="match status" value="1"/>
</dbReference>
<dbReference type="SUPFAM" id="SSF55186">
    <property type="entry name" value="ThrRS/AlaRS common domain"/>
    <property type="match status" value="1"/>
</dbReference>
<dbReference type="SUPFAM" id="SSF50447">
    <property type="entry name" value="Translation proteins"/>
    <property type="match status" value="1"/>
</dbReference>
<dbReference type="PROSITE" id="PS50860">
    <property type="entry name" value="AA_TRNA_LIGASE_II_ALA"/>
    <property type="match status" value="1"/>
</dbReference>
<comment type="function">
    <text evidence="1">Catalyzes the attachment of alanine to tRNA(Ala) in a two-step reaction: alanine is first activated by ATP to form Ala-AMP and then transferred to the acceptor end of tRNA(Ala). Also edits incorrectly charged Ser-tRNA(Ala) and Gly-tRNA(Ala) via its editing domain.</text>
</comment>
<comment type="catalytic activity">
    <reaction evidence="1">
        <text>tRNA(Ala) + L-alanine + ATP = L-alanyl-tRNA(Ala) + AMP + diphosphate</text>
        <dbReference type="Rhea" id="RHEA:12540"/>
        <dbReference type="Rhea" id="RHEA-COMP:9657"/>
        <dbReference type="Rhea" id="RHEA-COMP:9923"/>
        <dbReference type="ChEBI" id="CHEBI:30616"/>
        <dbReference type="ChEBI" id="CHEBI:33019"/>
        <dbReference type="ChEBI" id="CHEBI:57972"/>
        <dbReference type="ChEBI" id="CHEBI:78442"/>
        <dbReference type="ChEBI" id="CHEBI:78497"/>
        <dbReference type="ChEBI" id="CHEBI:456215"/>
        <dbReference type="EC" id="6.1.1.7"/>
    </reaction>
</comment>
<comment type="cofactor">
    <cofactor evidence="1">
        <name>Zn(2+)</name>
        <dbReference type="ChEBI" id="CHEBI:29105"/>
    </cofactor>
    <text evidence="1">Binds 1 zinc ion per subunit.</text>
</comment>
<comment type="subcellular location">
    <subcellularLocation>
        <location evidence="1">Cytoplasm</location>
    </subcellularLocation>
</comment>
<comment type="domain">
    <text evidence="1">Consists of three domains; the N-terminal catalytic domain, the editing domain and the C-terminal C-Ala domain. The editing domain removes incorrectly charged amino acids, while the C-Ala domain, along with tRNA(Ala), serves as a bridge to cooperatively bring together the editing and aminoacylation centers thus stimulating deacylation of misacylated tRNAs.</text>
</comment>
<comment type="similarity">
    <text evidence="1">Belongs to the class-II aminoacyl-tRNA synthetase family.</text>
</comment>
<evidence type="ECO:0000255" key="1">
    <source>
        <dbReference type="HAMAP-Rule" id="MF_00036"/>
    </source>
</evidence>
<organism>
    <name type="scientific">Francisella philomiragia subsp. philomiragia (strain ATCC 25017 / CCUG 19701 / FSC 153 / O#319-036)</name>
    <dbReference type="NCBI Taxonomy" id="484022"/>
    <lineage>
        <taxon>Bacteria</taxon>
        <taxon>Pseudomonadati</taxon>
        <taxon>Pseudomonadota</taxon>
        <taxon>Gammaproteobacteria</taxon>
        <taxon>Thiotrichales</taxon>
        <taxon>Francisellaceae</taxon>
        <taxon>Francisella</taxon>
    </lineage>
</organism>
<accession>B0TZY8</accession>
<proteinExistence type="inferred from homology"/>
<protein>
    <recommendedName>
        <fullName evidence="1">Alanine--tRNA ligase</fullName>
        <ecNumber evidence="1">6.1.1.7</ecNumber>
    </recommendedName>
    <alternativeName>
        <fullName evidence="1">Alanyl-tRNA synthetase</fullName>
        <shortName evidence="1">AlaRS</shortName>
    </alternativeName>
</protein>
<keyword id="KW-0030">Aminoacyl-tRNA synthetase</keyword>
<keyword id="KW-0067">ATP-binding</keyword>
<keyword id="KW-0963">Cytoplasm</keyword>
<keyword id="KW-0436">Ligase</keyword>
<keyword id="KW-0479">Metal-binding</keyword>
<keyword id="KW-0547">Nucleotide-binding</keyword>
<keyword id="KW-0648">Protein biosynthesis</keyword>
<keyword id="KW-0694">RNA-binding</keyword>
<keyword id="KW-0820">tRNA-binding</keyword>
<keyword id="KW-0862">Zinc</keyword>
<sequence>MISTKELRNKFISYFESKNHSHQPSSSLIPFGDDTLLFTNAGMVQFKDVFLGLEKRDFSRAVTVQKCLRAGGKHNDLDNVGYTARHHTFFEMLGNFSFGDYFKKDAISFAWEFLTKEIKLPVEKLWVTIYATDDEAFDVWHNHIGLPKERIIRIDSNDNFWSMGDTGPCGPCTEIFYDHGEDVAGGLPGTPDEDGDRYIEIWNIVFMQFNRHADGTVTDLPKPSVDTGMGLERIAAVLQDVHSNYDIDLFQALIKKAQEVTNADDINSPSLKVVADHIRSCAFLIADGVLPSNEGRGYVLRRIIRRAIRHGNKLGAKDIFFYKLVAELINQMGEAYPQLIDKRELIEKTLIKEEELFLKTIENGIKIFDTEIVSLKSDIISGEIAFRLYDTYGFPLDLTADMAREKGLKVDEEAFKEQMLKQKQRSKEAGKFNVDYNSIINSQAKSDFRGYSTLIEDAKVLEIYQDGQPVNAIQAGSTAVIVLDRTPFYAESGGQVGDKGVLEGVGVEFIVEDVQKSGEAILHIGKLSKGILNTYDEVTARVNDSVRLATAANHSATHLLHKVLKIILGSHAEQKGSLVDDNKLRFDFTHDKAISRVEIEQIETLVNQQIRANYPVATIETSQEKAKSLGAEALFGEKYGDIVRVISMGDFSIELCGGTHVAYTGDIGLFKIVSESGIASGIRRIEAITANKAIKYTFATENKLAAIKEITKSNDSNLLDKLQSMLEQLKNQEKEIAKLKKDILSGANSDIKESSIDGIKLIIANLEGVDIKTLREKIDDYKSKNDKMVAVLSTINADKVQFVIGVSKSITSLIKAGDIAKEFSGYIDGKGGGRPDMAQGGGNNSTNIDKALSDLENHISINIKK</sequence>
<reference key="1">
    <citation type="submission" date="2007-12" db="EMBL/GenBank/DDBJ databases">
        <title>Complete sequence of chromosome of Francisella philomiragia subsp. philomiragia ATCC 25017.</title>
        <authorList>
            <consortium name="US DOE Joint Genome Institute"/>
            <person name="Copeland A."/>
            <person name="Lucas S."/>
            <person name="Lapidus A."/>
            <person name="Barry K."/>
            <person name="Detter J.C."/>
            <person name="Glavina del Rio T."/>
            <person name="Hammon N."/>
            <person name="Israni S."/>
            <person name="Dalin E."/>
            <person name="Tice H."/>
            <person name="Pitluck S."/>
            <person name="Chain P."/>
            <person name="Malfatti S."/>
            <person name="Shin M."/>
            <person name="Vergez L."/>
            <person name="Schmutz J."/>
            <person name="Larimer F."/>
            <person name="Land M."/>
            <person name="Hauser L."/>
            <person name="Richardson P."/>
        </authorList>
    </citation>
    <scope>NUCLEOTIDE SEQUENCE [LARGE SCALE GENOMIC DNA]</scope>
    <source>
        <strain>ATCC 25017 / CCUG 19701 / FSC 153 / O#319-036</strain>
    </source>
</reference>
<name>SYA_FRAP2</name>
<feature type="chain" id="PRO_0000347609" description="Alanine--tRNA ligase">
    <location>
        <begin position="1"/>
        <end position="865"/>
    </location>
</feature>
<feature type="binding site" evidence="1">
    <location>
        <position position="554"/>
    </location>
    <ligand>
        <name>Zn(2+)</name>
        <dbReference type="ChEBI" id="CHEBI:29105"/>
    </ligand>
</feature>
<feature type="binding site" evidence="1">
    <location>
        <position position="558"/>
    </location>
    <ligand>
        <name>Zn(2+)</name>
        <dbReference type="ChEBI" id="CHEBI:29105"/>
    </ligand>
</feature>
<feature type="binding site" evidence="1">
    <location>
        <position position="656"/>
    </location>
    <ligand>
        <name>Zn(2+)</name>
        <dbReference type="ChEBI" id="CHEBI:29105"/>
    </ligand>
</feature>
<feature type="binding site" evidence="1">
    <location>
        <position position="660"/>
    </location>
    <ligand>
        <name>Zn(2+)</name>
        <dbReference type="ChEBI" id="CHEBI:29105"/>
    </ligand>
</feature>
<gene>
    <name evidence="1" type="primary">alaS</name>
    <name type="ordered locus">Fphi_1675</name>
</gene>